<comment type="function">
    <text evidence="1">Catalyzes the last two sequential reactions in the de novo biosynthetic pathway for UDP-N-acetylglucosamine (UDP-GlcNAc). The C-terminal domain catalyzes the transfer of acetyl group from acetyl coenzyme A to glucosamine-1-phosphate (GlcN-1-P) to produce N-acetylglucosamine-1-phosphate (GlcNAc-1-P), which is converted into UDP-GlcNAc by the transfer of uridine 5-monophosphate (from uridine 5-triphosphate), a reaction catalyzed by the N-terminal domain.</text>
</comment>
<comment type="catalytic activity">
    <reaction evidence="1">
        <text>alpha-D-glucosamine 1-phosphate + acetyl-CoA = N-acetyl-alpha-D-glucosamine 1-phosphate + CoA + H(+)</text>
        <dbReference type="Rhea" id="RHEA:13725"/>
        <dbReference type="ChEBI" id="CHEBI:15378"/>
        <dbReference type="ChEBI" id="CHEBI:57287"/>
        <dbReference type="ChEBI" id="CHEBI:57288"/>
        <dbReference type="ChEBI" id="CHEBI:57776"/>
        <dbReference type="ChEBI" id="CHEBI:58516"/>
        <dbReference type="EC" id="2.3.1.157"/>
    </reaction>
</comment>
<comment type="catalytic activity">
    <reaction evidence="1">
        <text>N-acetyl-alpha-D-glucosamine 1-phosphate + UTP + H(+) = UDP-N-acetyl-alpha-D-glucosamine + diphosphate</text>
        <dbReference type="Rhea" id="RHEA:13509"/>
        <dbReference type="ChEBI" id="CHEBI:15378"/>
        <dbReference type="ChEBI" id="CHEBI:33019"/>
        <dbReference type="ChEBI" id="CHEBI:46398"/>
        <dbReference type="ChEBI" id="CHEBI:57705"/>
        <dbReference type="ChEBI" id="CHEBI:57776"/>
        <dbReference type="EC" id="2.7.7.23"/>
    </reaction>
</comment>
<comment type="cofactor">
    <cofactor evidence="1">
        <name>Mg(2+)</name>
        <dbReference type="ChEBI" id="CHEBI:18420"/>
    </cofactor>
    <text evidence="1">Binds 1 Mg(2+) ion per subunit.</text>
</comment>
<comment type="pathway">
    <text evidence="1">Nucleotide-sugar biosynthesis; UDP-N-acetyl-alpha-D-glucosamine biosynthesis; N-acetyl-alpha-D-glucosamine 1-phosphate from alpha-D-glucosamine 6-phosphate (route II): step 2/2.</text>
</comment>
<comment type="pathway">
    <text evidence="1">Nucleotide-sugar biosynthesis; UDP-N-acetyl-alpha-D-glucosamine biosynthesis; UDP-N-acetyl-alpha-D-glucosamine from N-acetyl-alpha-D-glucosamine 1-phosphate: step 1/1.</text>
</comment>
<comment type="pathway">
    <text evidence="1">Bacterial outer membrane biogenesis; LPS lipid A biosynthesis.</text>
</comment>
<comment type="subunit">
    <text evidence="1">Homotrimer.</text>
</comment>
<comment type="subcellular location">
    <subcellularLocation>
        <location evidence="1">Cytoplasm</location>
    </subcellularLocation>
</comment>
<comment type="similarity">
    <text evidence="1">In the N-terminal section; belongs to the N-acetylglucosamine-1-phosphate uridyltransferase family.</text>
</comment>
<comment type="similarity">
    <text evidence="1">In the C-terminal section; belongs to the transferase hexapeptide repeat family.</text>
</comment>
<reference key="1">
    <citation type="journal article" date="2007" name="PLoS Genet.">
        <title>Meningococcal genetic variation mechanisms viewed through comparative analysis of serogroup C strain FAM18.</title>
        <authorList>
            <person name="Bentley S.D."/>
            <person name="Vernikos G.S."/>
            <person name="Snyder L.A.S."/>
            <person name="Churcher C."/>
            <person name="Arrowsmith C."/>
            <person name="Chillingworth T."/>
            <person name="Cronin A."/>
            <person name="Davis P.H."/>
            <person name="Holroyd N.E."/>
            <person name="Jagels K."/>
            <person name="Maddison M."/>
            <person name="Moule S."/>
            <person name="Rabbinowitsch E."/>
            <person name="Sharp S."/>
            <person name="Unwin L."/>
            <person name="Whitehead S."/>
            <person name="Quail M.A."/>
            <person name="Achtman M."/>
            <person name="Barrell B.G."/>
            <person name="Saunders N.J."/>
            <person name="Parkhill J."/>
        </authorList>
    </citation>
    <scope>NUCLEOTIDE SEQUENCE [LARGE SCALE GENOMIC DNA]</scope>
    <source>
        <strain>ATCC 700532 / DSM 15464 / FAM18</strain>
    </source>
</reference>
<feature type="chain" id="PRO_1000056175" description="Bifunctional protein GlmU">
    <location>
        <begin position="1"/>
        <end position="456"/>
    </location>
</feature>
<feature type="region of interest" description="Pyrophosphorylase" evidence="1">
    <location>
        <begin position="1"/>
        <end position="228"/>
    </location>
</feature>
<feature type="region of interest" description="Linker" evidence="1">
    <location>
        <begin position="229"/>
        <end position="249"/>
    </location>
</feature>
<feature type="region of interest" description="N-acetyltransferase" evidence="1">
    <location>
        <begin position="250"/>
        <end position="456"/>
    </location>
</feature>
<feature type="active site" description="Proton acceptor" evidence="1">
    <location>
        <position position="362"/>
    </location>
</feature>
<feature type="binding site" evidence="1">
    <location>
        <begin position="11"/>
        <end position="14"/>
    </location>
    <ligand>
        <name>UDP-N-acetyl-alpha-D-glucosamine</name>
        <dbReference type="ChEBI" id="CHEBI:57705"/>
    </ligand>
</feature>
<feature type="binding site" evidence="1">
    <location>
        <position position="25"/>
    </location>
    <ligand>
        <name>UDP-N-acetyl-alpha-D-glucosamine</name>
        <dbReference type="ChEBI" id="CHEBI:57705"/>
    </ligand>
</feature>
<feature type="binding site" evidence="1">
    <location>
        <position position="75"/>
    </location>
    <ligand>
        <name>UDP-N-acetyl-alpha-D-glucosamine</name>
        <dbReference type="ChEBI" id="CHEBI:57705"/>
    </ligand>
</feature>
<feature type="binding site" evidence="1">
    <location>
        <begin position="80"/>
        <end position="81"/>
    </location>
    <ligand>
        <name>UDP-N-acetyl-alpha-D-glucosamine</name>
        <dbReference type="ChEBI" id="CHEBI:57705"/>
    </ligand>
</feature>
<feature type="binding site" evidence="1">
    <location>
        <begin position="102"/>
        <end position="104"/>
    </location>
    <ligand>
        <name>UDP-N-acetyl-alpha-D-glucosamine</name>
        <dbReference type="ChEBI" id="CHEBI:57705"/>
    </ligand>
</feature>
<feature type="binding site" evidence="1">
    <location>
        <position position="104"/>
    </location>
    <ligand>
        <name>Mg(2+)</name>
        <dbReference type="ChEBI" id="CHEBI:18420"/>
    </ligand>
</feature>
<feature type="binding site" evidence="1">
    <location>
        <position position="138"/>
    </location>
    <ligand>
        <name>UDP-N-acetyl-alpha-D-glucosamine</name>
        <dbReference type="ChEBI" id="CHEBI:57705"/>
    </ligand>
</feature>
<feature type="binding site" evidence="1">
    <location>
        <position position="153"/>
    </location>
    <ligand>
        <name>UDP-N-acetyl-alpha-D-glucosamine</name>
        <dbReference type="ChEBI" id="CHEBI:57705"/>
    </ligand>
</feature>
<feature type="binding site" evidence="1">
    <location>
        <position position="168"/>
    </location>
    <ligand>
        <name>UDP-N-acetyl-alpha-D-glucosamine</name>
        <dbReference type="ChEBI" id="CHEBI:57705"/>
    </ligand>
</feature>
<feature type="binding site" evidence="1">
    <location>
        <position position="226"/>
    </location>
    <ligand>
        <name>Mg(2+)</name>
        <dbReference type="ChEBI" id="CHEBI:18420"/>
    </ligand>
</feature>
<feature type="binding site" evidence="1">
    <location>
        <position position="226"/>
    </location>
    <ligand>
        <name>UDP-N-acetyl-alpha-D-glucosamine</name>
        <dbReference type="ChEBI" id="CHEBI:57705"/>
    </ligand>
</feature>
<feature type="binding site" evidence="1">
    <location>
        <position position="332"/>
    </location>
    <ligand>
        <name>UDP-N-acetyl-alpha-D-glucosamine</name>
        <dbReference type="ChEBI" id="CHEBI:57705"/>
    </ligand>
</feature>
<feature type="binding site" evidence="1">
    <location>
        <position position="350"/>
    </location>
    <ligand>
        <name>UDP-N-acetyl-alpha-D-glucosamine</name>
        <dbReference type="ChEBI" id="CHEBI:57705"/>
    </ligand>
</feature>
<feature type="binding site" evidence="1">
    <location>
        <position position="365"/>
    </location>
    <ligand>
        <name>UDP-N-acetyl-alpha-D-glucosamine</name>
        <dbReference type="ChEBI" id="CHEBI:57705"/>
    </ligand>
</feature>
<feature type="binding site" evidence="1">
    <location>
        <position position="376"/>
    </location>
    <ligand>
        <name>UDP-N-acetyl-alpha-D-glucosamine</name>
        <dbReference type="ChEBI" id="CHEBI:57705"/>
    </ligand>
</feature>
<feature type="binding site" evidence="1">
    <location>
        <position position="379"/>
    </location>
    <ligand>
        <name>acetyl-CoA</name>
        <dbReference type="ChEBI" id="CHEBI:57288"/>
    </ligand>
</feature>
<feature type="binding site" evidence="1">
    <location>
        <begin position="385"/>
        <end position="386"/>
    </location>
    <ligand>
        <name>acetyl-CoA</name>
        <dbReference type="ChEBI" id="CHEBI:57288"/>
    </ligand>
</feature>
<feature type="binding site" evidence="1">
    <location>
        <position position="404"/>
    </location>
    <ligand>
        <name>acetyl-CoA</name>
        <dbReference type="ChEBI" id="CHEBI:57288"/>
    </ligand>
</feature>
<feature type="binding site" evidence="1">
    <location>
        <position position="422"/>
    </location>
    <ligand>
        <name>acetyl-CoA</name>
        <dbReference type="ChEBI" id="CHEBI:57288"/>
    </ligand>
</feature>
<feature type="binding site" evidence="1">
    <location>
        <position position="439"/>
    </location>
    <ligand>
        <name>acetyl-CoA</name>
        <dbReference type="ChEBI" id="CHEBI:57288"/>
    </ligand>
</feature>
<gene>
    <name evidence="1" type="primary">glmU</name>
    <name type="ordered locus">NMC0015</name>
</gene>
<evidence type="ECO:0000255" key="1">
    <source>
        <dbReference type="HAMAP-Rule" id="MF_01631"/>
    </source>
</evidence>
<sequence>MPQNTLNIVILAAGKGTRMYSKMPKVLHRIGGKPMLGRVIDTAAALNPQNICVVIGHGKDQVLNAVKRDVVWVEQTEQLGTGHAVKTALPHLSAEGRTLVLYGDVPLIDVKTLKTLLEAAGNEVGLLTDVPADPTGLGRIIRDGNGSVTAIVEEKDADAAQKAVKEINTGILVLPNAKLENWLNSLSSNNAQGEYYLTDLIAKAVADGIKVHPVQVHTSYLAAGVNNKLQLAELERIFQTEQAQELLKAGVTLSDPARFDLRGRLKHGQDVVIDVNCIFEGEVEIGDNVEIGANCVIKNAKIGANSKIAPFSHLEDCEVGENNRIGPYARLRPQAKLAADVHIGNFVEIKNAAIGKGTKANHLTYIGDAEVGSKTNFGAGTIIANYDGVHKHKTVIGNEVRIGSNCVLVAPVTLGNKVTTGAGSAITRNVEDGKLALARARQTVIEGWVRPEKDKQ</sequence>
<organism>
    <name type="scientific">Neisseria meningitidis serogroup C / serotype 2a (strain ATCC 700532 / DSM 15464 / FAM18)</name>
    <dbReference type="NCBI Taxonomy" id="272831"/>
    <lineage>
        <taxon>Bacteria</taxon>
        <taxon>Pseudomonadati</taxon>
        <taxon>Pseudomonadota</taxon>
        <taxon>Betaproteobacteria</taxon>
        <taxon>Neisseriales</taxon>
        <taxon>Neisseriaceae</taxon>
        <taxon>Neisseria</taxon>
    </lineage>
</organism>
<dbReference type="EC" id="2.7.7.23" evidence="1"/>
<dbReference type="EC" id="2.3.1.157" evidence="1"/>
<dbReference type="EMBL" id="AM421808">
    <property type="protein sequence ID" value="CAM09341.1"/>
    <property type="molecule type" value="Genomic_DNA"/>
</dbReference>
<dbReference type="RefSeq" id="WP_002220084.1">
    <property type="nucleotide sequence ID" value="NC_008767.1"/>
</dbReference>
<dbReference type="SMR" id="A1KR65"/>
<dbReference type="KEGG" id="nmc:NMC0015"/>
<dbReference type="HOGENOM" id="CLU_029499_15_2_4"/>
<dbReference type="UniPathway" id="UPA00113">
    <property type="reaction ID" value="UER00532"/>
</dbReference>
<dbReference type="UniPathway" id="UPA00113">
    <property type="reaction ID" value="UER00533"/>
</dbReference>
<dbReference type="UniPathway" id="UPA00973"/>
<dbReference type="Proteomes" id="UP000002286">
    <property type="component" value="Chromosome"/>
</dbReference>
<dbReference type="GO" id="GO:0005737">
    <property type="term" value="C:cytoplasm"/>
    <property type="evidence" value="ECO:0007669"/>
    <property type="project" value="UniProtKB-SubCell"/>
</dbReference>
<dbReference type="GO" id="GO:0016020">
    <property type="term" value="C:membrane"/>
    <property type="evidence" value="ECO:0007669"/>
    <property type="project" value="GOC"/>
</dbReference>
<dbReference type="GO" id="GO:0019134">
    <property type="term" value="F:glucosamine-1-phosphate N-acetyltransferase activity"/>
    <property type="evidence" value="ECO:0007669"/>
    <property type="project" value="UniProtKB-UniRule"/>
</dbReference>
<dbReference type="GO" id="GO:0000287">
    <property type="term" value="F:magnesium ion binding"/>
    <property type="evidence" value="ECO:0007669"/>
    <property type="project" value="UniProtKB-UniRule"/>
</dbReference>
<dbReference type="GO" id="GO:0003977">
    <property type="term" value="F:UDP-N-acetylglucosamine diphosphorylase activity"/>
    <property type="evidence" value="ECO:0007669"/>
    <property type="project" value="UniProtKB-UniRule"/>
</dbReference>
<dbReference type="GO" id="GO:0000902">
    <property type="term" value="P:cell morphogenesis"/>
    <property type="evidence" value="ECO:0007669"/>
    <property type="project" value="UniProtKB-UniRule"/>
</dbReference>
<dbReference type="GO" id="GO:0071555">
    <property type="term" value="P:cell wall organization"/>
    <property type="evidence" value="ECO:0007669"/>
    <property type="project" value="UniProtKB-KW"/>
</dbReference>
<dbReference type="GO" id="GO:0009245">
    <property type="term" value="P:lipid A biosynthetic process"/>
    <property type="evidence" value="ECO:0007669"/>
    <property type="project" value="UniProtKB-UniRule"/>
</dbReference>
<dbReference type="GO" id="GO:0009252">
    <property type="term" value="P:peptidoglycan biosynthetic process"/>
    <property type="evidence" value="ECO:0007669"/>
    <property type="project" value="UniProtKB-UniRule"/>
</dbReference>
<dbReference type="GO" id="GO:0008360">
    <property type="term" value="P:regulation of cell shape"/>
    <property type="evidence" value="ECO:0007669"/>
    <property type="project" value="UniProtKB-KW"/>
</dbReference>
<dbReference type="GO" id="GO:0006048">
    <property type="term" value="P:UDP-N-acetylglucosamine biosynthetic process"/>
    <property type="evidence" value="ECO:0007669"/>
    <property type="project" value="UniProtKB-UniPathway"/>
</dbReference>
<dbReference type="CDD" id="cd02540">
    <property type="entry name" value="GT2_GlmU_N_bac"/>
    <property type="match status" value="1"/>
</dbReference>
<dbReference type="CDD" id="cd03353">
    <property type="entry name" value="LbH_GlmU_C"/>
    <property type="match status" value="1"/>
</dbReference>
<dbReference type="Gene3D" id="2.160.10.10">
    <property type="entry name" value="Hexapeptide repeat proteins"/>
    <property type="match status" value="1"/>
</dbReference>
<dbReference type="Gene3D" id="3.90.550.10">
    <property type="entry name" value="Spore Coat Polysaccharide Biosynthesis Protein SpsA, Chain A"/>
    <property type="match status" value="1"/>
</dbReference>
<dbReference type="HAMAP" id="MF_01631">
    <property type="entry name" value="GlmU"/>
    <property type="match status" value="1"/>
</dbReference>
<dbReference type="InterPro" id="IPR005882">
    <property type="entry name" value="Bifunctional_GlmU"/>
</dbReference>
<dbReference type="InterPro" id="IPR050065">
    <property type="entry name" value="GlmU-like"/>
</dbReference>
<dbReference type="InterPro" id="IPR038009">
    <property type="entry name" value="GlmU_C_LbH"/>
</dbReference>
<dbReference type="InterPro" id="IPR001451">
    <property type="entry name" value="Hexapep"/>
</dbReference>
<dbReference type="InterPro" id="IPR025877">
    <property type="entry name" value="MobA-like_NTP_Trfase"/>
</dbReference>
<dbReference type="InterPro" id="IPR029044">
    <property type="entry name" value="Nucleotide-diphossugar_trans"/>
</dbReference>
<dbReference type="InterPro" id="IPR011004">
    <property type="entry name" value="Trimer_LpxA-like_sf"/>
</dbReference>
<dbReference type="NCBIfam" id="TIGR01173">
    <property type="entry name" value="glmU"/>
    <property type="match status" value="1"/>
</dbReference>
<dbReference type="PANTHER" id="PTHR43584:SF3">
    <property type="entry name" value="BIFUNCTIONAL PROTEIN GLMU"/>
    <property type="match status" value="1"/>
</dbReference>
<dbReference type="PANTHER" id="PTHR43584">
    <property type="entry name" value="NUCLEOTIDYL TRANSFERASE"/>
    <property type="match status" value="1"/>
</dbReference>
<dbReference type="Pfam" id="PF00132">
    <property type="entry name" value="Hexapep"/>
    <property type="match status" value="3"/>
</dbReference>
<dbReference type="Pfam" id="PF12804">
    <property type="entry name" value="NTP_transf_3"/>
    <property type="match status" value="1"/>
</dbReference>
<dbReference type="SUPFAM" id="SSF53448">
    <property type="entry name" value="Nucleotide-diphospho-sugar transferases"/>
    <property type="match status" value="1"/>
</dbReference>
<dbReference type="SUPFAM" id="SSF51161">
    <property type="entry name" value="Trimeric LpxA-like enzymes"/>
    <property type="match status" value="1"/>
</dbReference>
<protein>
    <recommendedName>
        <fullName evidence="1">Bifunctional protein GlmU</fullName>
    </recommendedName>
    <domain>
        <recommendedName>
            <fullName evidence="1">UDP-N-acetylglucosamine pyrophosphorylase</fullName>
            <ecNumber evidence="1">2.7.7.23</ecNumber>
        </recommendedName>
        <alternativeName>
            <fullName evidence="1">N-acetylglucosamine-1-phosphate uridyltransferase</fullName>
        </alternativeName>
    </domain>
    <domain>
        <recommendedName>
            <fullName evidence="1">Glucosamine-1-phosphate N-acetyltransferase</fullName>
            <ecNumber evidence="1">2.3.1.157</ecNumber>
        </recommendedName>
    </domain>
</protein>
<name>GLMU_NEIMF</name>
<keyword id="KW-0012">Acyltransferase</keyword>
<keyword id="KW-0133">Cell shape</keyword>
<keyword id="KW-0961">Cell wall biogenesis/degradation</keyword>
<keyword id="KW-0963">Cytoplasm</keyword>
<keyword id="KW-0460">Magnesium</keyword>
<keyword id="KW-0479">Metal-binding</keyword>
<keyword id="KW-0511">Multifunctional enzyme</keyword>
<keyword id="KW-0548">Nucleotidyltransferase</keyword>
<keyword id="KW-0573">Peptidoglycan synthesis</keyword>
<keyword id="KW-0677">Repeat</keyword>
<keyword id="KW-0808">Transferase</keyword>
<accession>A1KR65</accession>
<proteinExistence type="inferred from homology"/>